<reference key="1">
    <citation type="submission" date="2006-02" db="EMBL/GenBank/DDBJ databases">
        <title>Complete sequence of chromosome of Rhodoferax ferrireducens DSM 15236.</title>
        <authorList>
            <person name="Copeland A."/>
            <person name="Lucas S."/>
            <person name="Lapidus A."/>
            <person name="Barry K."/>
            <person name="Detter J.C."/>
            <person name="Glavina del Rio T."/>
            <person name="Hammon N."/>
            <person name="Israni S."/>
            <person name="Pitluck S."/>
            <person name="Brettin T."/>
            <person name="Bruce D."/>
            <person name="Han C."/>
            <person name="Tapia R."/>
            <person name="Gilna P."/>
            <person name="Kiss H."/>
            <person name="Schmutz J."/>
            <person name="Larimer F."/>
            <person name="Land M."/>
            <person name="Kyrpides N."/>
            <person name="Ivanova N."/>
            <person name="Richardson P."/>
        </authorList>
    </citation>
    <scope>NUCLEOTIDE SEQUENCE [LARGE SCALE GENOMIC DNA]</scope>
    <source>
        <strain>ATCC BAA-621 / DSM 15236 / T118</strain>
    </source>
</reference>
<protein>
    <recommendedName>
        <fullName evidence="1">Flagellar P-ring protein</fullName>
    </recommendedName>
    <alternativeName>
        <fullName evidence="1">Basal body P-ring protein</fullName>
    </alternativeName>
</protein>
<comment type="function">
    <text evidence="1">Assembles around the rod to form the L-ring and probably protects the motor/basal body from shearing forces during rotation.</text>
</comment>
<comment type="subunit">
    <text evidence="1">The basal body constitutes a major portion of the flagellar organelle and consists of four rings (L,P,S, and M) mounted on a central rod.</text>
</comment>
<comment type="subcellular location">
    <subcellularLocation>
        <location evidence="1">Periplasm</location>
    </subcellularLocation>
    <subcellularLocation>
        <location evidence="1">Bacterial flagellum basal body</location>
    </subcellularLocation>
</comment>
<comment type="similarity">
    <text evidence="1">Belongs to the FlgI family.</text>
</comment>
<accession>Q21S32</accession>
<proteinExistence type="inferred from homology"/>
<dbReference type="EMBL" id="CP000267">
    <property type="protein sequence ID" value="ABD71421.1"/>
    <property type="molecule type" value="Genomic_DNA"/>
</dbReference>
<dbReference type="RefSeq" id="WP_011465984.1">
    <property type="nucleotide sequence ID" value="NC_007908.1"/>
</dbReference>
<dbReference type="SMR" id="Q21S32"/>
<dbReference type="STRING" id="338969.Rfer_3721"/>
<dbReference type="KEGG" id="rfr:Rfer_3721"/>
<dbReference type="eggNOG" id="COG1706">
    <property type="taxonomic scope" value="Bacteria"/>
</dbReference>
<dbReference type="HOGENOM" id="CLU_045235_1_0_4"/>
<dbReference type="OrthoDB" id="9786431at2"/>
<dbReference type="Proteomes" id="UP000008332">
    <property type="component" value="Chromosome"/>
</dbReference>
<dbReference type="GO" id="GO:0009428">
    <property type="term" value="C:bacterial-type flagellum basal body, distal rod, P ring"/>
    <property type="evidence" value="ECO:0007669"/>
    <property type="project" value="InterPro"/>
</dbReference>
<dbReference type="GO" id="GO:0030288">
    <property type="term" value="C:outer membrane-bounded periplasmic space"/>
    <property type="evidence" value="ECO:0007669"/>
    <property type="project" value="InterPro"/>
</dbReference>
<dbReference type="GO" id="GO:0005198">
    <property type="term" value="F:structural molecule activity"/>
    <property type="evidence" value="ECO:0007669"/>
    <property type="project" value="InterPro"/>
</dbReference>
<dbReference type="GO" id="GO:0071973">
    <property type="term" value="P:bacterial-type flagellum-dependent cell motility"/>
    <property type="evidence" value="ECO:0007669"/>
    <property type="project" value="InterPro"/>
</dbReference>
<dbReference type="HAMAP" id="MF_00416">
    <property type="entry name" value="FlgI"/>
    <property type="match status" value="1"/>
</dbReference>
<dbReference type="InterPro" id="IPR001782">
    <property type="entry name" value="Flag_FlgI"/>
</dbReference>
<dbReference type="NCBIfam" id="NF003676">
    <property type="entry name" value="PRK05303.1"/>
    <property type="match status" value="1"/>
</dbReference>
<dbReference type="PANTHER" id="PTHR30381">
    <property type="entry name" value="FLAGELLAR P-RING PERIPLASMIC PROTEIN FLGI"/>
    <property type="match status" value="1"/>
</dbReference>
<dbReference type="PANTHER" id="PTHR30381:SF0">
    <property type="entry name" value="FLAGELLAR P-RING PROTEIN"/>
    <property type="match status" value="1"/>
</dbReference>
<dbReference type="Pfam" id="PF02119">
    <property type="entry name" value="FlgI"/>
    <property type="match status" value="1"/>
</dbReference>
<dbReference type="PRINTS" id="PR01010">
    <property type="entry name" value="FLGPRINGFLGI"/>
</dbReference>
<feature type="signal peptide" evidence="1">
    <location>
        <begin position="1"/>
        <end position="33"/>
    </location>
</feature>
<feature type="chain" id="PRO_5000110763" description="Flagellar P-ring protein">
    <location>
        <begin position="34"/>
        <end position="381"/>
    </location>
</feature>
<name>FLGI_ALBFT</name>
<gene>
    <name evidence="1" type="primary">flgI</name>
    <name type="ordered locus">Rfer_3721</name>
</gene>
<evidence type="ECO:0000255" key="1">
    <source>
        <dbReference type="HAMAP-Rule" id="MF_00416"/>
    </source>
</evidence>
<keyword id="KW-0975">Bacterial flagellum</keyword>
<keyword id="KW-0574">Periplasm</keyword>
<keyword id="KW-1185">Reference proteome</keyword>
<keyword id="KW-0732">Signal</keyword>
<sequence length="381" mass="39292">MQFFNTLHPTRPHWLLAALCLIASLLGAGTAQASRIKEVAAVEGVRSNQLTGFGLVVGLDGTGDQTTQMPYTAQGLTNYLQQLGITLPEAQVSKLQLKNVAAVLVTAALPAFARPGQAIDVNVSSMGNAKSLKGGTLITTPLKGADGEVYALAQGSLVVAGAGAAAGGSKVQINHLSAGRIPGGAQVERIVPTPLLEGASITLGLQASDFQTARRVAEAINRRFGAHSARALDGRTIDVTAPSESNARVSFIAEMEELQLESSIPSAKVVINSRTGSIVMNQAVTLGECAIAHGNLSVSISTTPVISQPNPLSTGGKTVVAEKSNIQIRQEPGMLIQLPKSTQLSDVVRALNALGATPQDLLAILQAIKAAGALNAELEVI</sequence>
<organism>
    <name type="scientific">Albidiferax ferrireducens (strain ATCC BAA-621 / DSM 15236 / T118)</name>
    <name type="common">Rhodoferax ferrireducens</name>
    <dbReference type="NCBI Taxonomy" id="338969"/>
    <lineage>
        <taxon>Bacteria</taxon>
        <taxon>Pseudomonadati</taxon>
        <taxon>Pseudomonadota</taxon>
        <taxon>Betaproteobacteria</taxon>
        <taxon>Burkholderiales</taxon>
        <taxon>Comamonadaceae</taxon>
        <taxon>Rhodoferax</taxon>
    </lineage>
</organism>